<accession>P0CQ82</accession>
<accession>Q55YW1</accession>
<accession>Q5KN79</accession>
<reference key="1">
    <citation type="journal article" date="2005" name="Science">
        <title>The genome of the basidiomycetous yeast and human pathogen Cryptococcus neoformans.</title>
        <authorList>
            <person name="Loftus B.J."/>
            <person name="Fung E."/>
            <person name="Roncaglia P."/>
            <person name="Rowley D."/>
            <person name="Amedeo P."/>
            <person name="Bruno D."/>
            <person name="Vamathevan J."/>
            <person name="Miranda M."/>
            <person name="Anderson I.J."/>
            <person name="Fraser J.A."/>
            <person name="Allen J.E."/>
            <person name="Bosdet I.E."/>
            <person name="Brent M.R."/>
            <person name="Chiu R."/>
            <person name="Doering T.L."/>
            <person name="Donlin M.J."/>
            <person name="D'Souza C.A."/>
            <person name="Fox D.S."/>
            <person name="Grinberg V."/>
            <person name="Fu J."/>
            <person name="Fukushima M."/>
            <person name="Haas B.J."/>
            <person name="Huang J.C."/>
            <person name="Janbon G."/>
            <person name="Jones S.J.M."/>
            <person name="Koo H.L."/>
            <person name="Krzywinski M.I."/>
            <person name="Kwon-Chung K.J."/>
            <person name="Lengeler K.B."/>
            <person name="Maiti R."/>
            <person name="Marra M.A."/>
            <person name="Marra R.E."/>
            <person name="Mathewson C.A."/>
            <person name="Mitchell T.G."/>
            <person name="Pertea M."/>
            <person name="Riggs F.R."/>
            <person name="Salzberg S.L."/>
            <person name="Schein J.E."/>
            <person name="Shvartsbeyn A."/>
            <person name="Shin H."/>
            <person name="Shumway M."/>
            <person name="Specht C.A."/>
            <person name="Suh B.B."/>
            <person name="Tenney A."/>
            <person name="Utterback T.R."/>
            <person name="Wickes B.L."/>
            <person name="Wortman J.R."/>
            <person name="Wye N.H."/>
            <person name="Kronstad J.W."/>
            <person name="Lodge J.K."/>
            <person name="Heitman J."/>
            <person name="Davis R.W."/>
            <person name="Fraser C.M."/>
            <person name="Hyman R.W."/>
        </authorList>
    </citation>
    <scope>NUCLEOTIDE SEQUENCE [LARGE SCALE GENOMIC DNA]</scope>
    <source>
        <strain>JEC21 / ATCC MYA-565</strain>
    </source>
</reference>
<gene>
    <name type="primary">DBP4</name>
    <name type="ordered locus">CNA07420</name>
</gene>
<dbReference type="EC" id="3.6.4.13"/>
<dbReference type="EMBL" id="AE017341">
    <property type="protein sequence ID" value="AAW41239.2"/>
    <property type="molecule type" value="Genomic_DNA"/>
</dbReference>
<dbReference type="RefSeq" id="XP_567058.1">
    <property type="nucleotide sequence ID" value="XM_567058.1"/>
</dbReference>
<dbReference type="SMR" id="P0CQ82"/>
<dbReference type="FunCoup" id="P0CQ82">
    <property type="interactions" value="800"/>
</dbReference>
<dbReference type="STRING" id="214684.P0CQ82"/>
<dbReference type="PaxDb" id="214684-P0CQ82"/>
<dbReference type="eggNOG" id="KOG0343">
    <property type="taxonomic scope" value="Eukaryota"/>
</dbReference>
<dbReference type="HOGENOM" id="CLU_003041_26_1_1"/>
<dbReference type="InParanoid" id="P0CQ82"/>
<dbReference type="Proteomes" id="UP000002149">
    <property type="component" value="Chromosome 1"/>
</dbReference>
<dbReference type="GO" id="GO:0005730">
    <property type="term" value="C:nucleolus"/>
    <property type="evidence" value="ECO:0007669"/>
    <property type="project" value="UniProtKB-SubCell"/>
</dbReference>
<dbReference type="GO" id="GO:0005634">
    <property type="term" value="C:nucleus"/>
    <property type="evidence" value="ECO:0000318"/>
    <property type="project" value="GO_Central"/>
</dbReference>
<dbReference type="GO" id="GO:0032040">
    <property type="term" value="C:small-subunit processome"/>
    <property type="evidence" value="ECO:0007669"/>
    <property type="project" value="EnsemblFungi"/>
</dbReference>
<dbReference type="GO" id="GO:0005524">
    <property type="term" value="F:ATP binding"/>
    <property type="evidence" value="ECO:0007669"/>
    <property type="project" value="UniProtKB-KW"/>
</dbReference>
<dbReference type="GO" id="GO:0016887">
    <property type="term" value="F:ATP hydrolysis activity"/>
    <property type="evidence" value="ECO:0007669"/>
    <property type="project" value="RHEA"/>
</dbReference>
<dbReference type="GO" id="GO:0042802">
    <property type="term" value="F:identical protein binding"/>
    <property type="evidence" value="ECO:0007669"/>
    <property type="project" value="EnsemblFungi"/>
</dbReference>
<dbReference type="GO" id="GO:0003723">
    <property type="term" value="F:RNA binding"/>
    <property type="evidence" value="ECO:0007669"/>
    <property type="project" value="UniProtKB-KW"/>
</dbReference>
<dbReference type="GO" id="GO:0003724">
    <property type="term" value="F:RNA helicase activity"/>
    <property type="evidence" value="ECO:0007669"/>
    <property type="project" value="UniProtKB-EC"/>
</dbReference>
<dbReference type="GO" id="GO:0006364">
    <property type="term" value="P:rRNA processing"/>
    <property type="evidence" value="ECO:0000318"/>
    <property type="project" value="GO_Central"/>
</dbReference>
<dbReference type="CDD" id="cd17941">
    <property type="entry name" value="DEADc_DDX10"/>
    <property type="match status" value="1"/>
</dbReference>
<dbReference type="CDD" id="cd18787">
    <property type="entry name" value="SF2_C_DEAD"/>
    <property type="match status" value="1"/>
</dbReference>
<dbReference type="Gene3D" id="3.40.50.300">
    <property type="entry name" value="P-loop containing nucleotide triphosphate hydrolases"/>
    <property type="match status" value="2"/>
</dbReference>
<dbReference type="InterPro" id="IPR011545">
    <property type="entry name" value="DEAD/DEAH_box_helicase_dom"/>
</dbReference>
<dbReference type="InterPro" id="IPR014001">
    <property type="entry name" value="Helicase_ATP-bd"/>
</dbReference>
<dbReference type="InterPro" id="IPR001650">
    <property type="entry name" value="Helicase_C-like"/>
</dbReference>
<dbReference type="InterPro" id="IPR027417">
    <property type="entry name" value="P-loop_NTPase"/>
</dbReference>
<dbReference type="InterPro" id="IPR000629">
    <property type="entry name" value="RNA-helicase_DEAD-box_CS"/>
</dbReference>
<dbReference type="InterPro" id="IPR014014">
    <property type="entry name" value="RNA_helicase_DEAD_Q_motif"/>
</dbReference>
<dbReference type="InterPro" id="IPR025313">
    <property type="entry name" value="SPB4-like_CTE"/>
</dbReference>
<dbReference type="PANTHER" id="PTHR24031">
    <property type="entry name" value="RNA HELICASE"/>
    <property type="match status" value="1"/>
</dbReference>
<dbReference type="Pfam" id="PF13959">
    <property type="entry name" value="CTE_SPB4"/>
    <property type="match status" value="1"/>
</dbReference>
<dbReference type="Pfam" id="PF00270">
    <property type="entry name" value="DEAD"/>
    <property type="match status" value="1"/>
</dbReference>
<dbReference type="Pfam" id="PF00271">
    <property type="entry name" value="Helicase_C"/>
    <property type="match status" value="1"/>
</dbReference>
<dbReference type="SMART" id="SM00487">
    <property type="entry name" value="DEXDc"/>
    <property type="match status" value="1"/>
</dbReference>
<dbReference type="SMART" id="SM01178">
    <property type="entry name" value="DUF4217"/>
    <property type="match status" value="1"/>
</dbReference>
<dbReference type="SMART" id="SM00490">
    <property type="entry name" value="HELICc"/>
    <property type="match status" value="1"/>
</dbReference>
<dbReference type="SUPFAM" id="SSF52540">
    <property type="entry name" value="P-loop containing nucleoside triphosphate hydrolases"/>
    <property type="match status" value="1"/>
</dbReference>
<dbReference type="PROSITE" id="PS00039">
    <property type="entry name" value="DEAD_ATP_HELICASE"/>
    <property type="match status" value="1"/>
</dbReference>
<dbReference type="PROSITE" id="PS51192">
    <property type="entry name" value="HELICASE_ATP_BIND_1"/>
    <property type="match status" value="1"/>
</dbReference>
<dbReference type="PROSITE" id="PS51194">
    <property type="entry name" value="HELICASE_CTER"/>
    <property type="match status" value="1"/>
</dbReference>
<dbReference type="PROSITE" id="PS51195">
    <property type="entry name" value="Q_MOTIF"/>
    <property type="match status" value="1"/>
</dbReference>
<sequence>MALGDKNQGSSKSQAKQKGTKGKNAQPRLKSNQLKRLKINEELKELQSRVDNFVPPSEITLFSELPMSSKTQKGLKSSHFLNPTPIQSLAIPPALQARDILGSAKTGSGKTLAFLIPLLERLYLEKWGPMDGLGAVVISPTRELAVQTFMQLRDIGKYHNFSAGLVIGGKPLKEEQERLGRMNILIATPGRLLQHLDSTVGFDSSAVKVLVLDEADRLLDLGFLPALKAIVSHFSPVQTAPGSRPSRQTLLFSATQSKDLAALAKLSLYEPLYISCNKPGEEGVMPANLEQYYAVVPLERKLDALWGFVKSHLKMKGIVFVTSGKQVRFIFETFRRLHPGLPLMHLHGKQKQPTRLDIFQRFSSSKSALLICTDVAARGLDFPAVDWVIQLDCPDDVDTYIHRVGRTARYQSAGTALTILCPSEEEGMKTRWGEKAIEVKRIKIKEGKMGNLKQSMQNFAFKEPEIKYLGQRAFISYMKSVHIQKDKSIFKIDALPAEAFAESMGLPGAPQIKLGNQKAAKVRGPSKEELARKAEKEEEEEEERAVVGSDEESEEDESEGLGSEDEEEEIDDEAEEIDDEEESGEESGSDEETEEEKDASKPKAPAVRTKYDRMFERKNQSILTPHYTALIAHDADNAAGAGEADDDDDVFTLARRDHNLSDDEEADTDAILGAEALAAELKKPLITSEDLSKRKLKAAASKKGLLKSRPGPEKVLFDEETGEAREFYKSGVDVEKEMSAADKRREYLEKEREIMKIQDKIDKEVAREKKKELKRKRKERERELRQMEMGDEPVAYLGGDDDYASADEGRSLSPSPAPSLEPERHAKKQRRGGVQESGAGDLEDEEALALRLLQGS</sequence>
<comment type="function">
    <text evidence="1">ATP-dependent RNA helicase required for ribosome biogenesis. Involved in the release of U14 snoRNA in pre-ribosomal complexes. Required for pre-rRNA cleavage at site A2 (By similarity).</text>
</comment>
<comment type="catalytic activity">
    <reaction>
        <text>ATP + H2O = ADP + phosphate + H(+)</text>
        <dbReference type="Rhea" id="RHEA:13065"/>
        <dbReference type="ChEBI" id="CHEBI:15377"/>
        <dbReference type="ChEBI" id="CHEBI:15378"/>
        <dbReference type="ChEBI" id="CHEBI:30616"/>
        <dbReference type="ChEBI" id="CHEBI:43474"/>
        <dbReference type="ChEBI" id="CHEBI:456216"/>
        <dbReference type="EC" id="3.6.4.13"/>
    </reaction>
</comment>
<comment type="subunit">
    <text evidence="1">Interacts with the U3 and U14 snoRNAs. Associates with pre-ribosomal complexes (By similarity).</text>
</comment>
<comment type="subcellular location">
    <subcellularLocation>
        <location evidence="1">Nucleus</location>
        <location evidence="1">Nucleolus</location>
    </subcellularLocation>
</comment>
<comment type="domain">
    <text>The Q motif is unique to and characteristic of the DEAD box family of RNA helicases and controls ATP binding and hydrolysis.</text>
</comment>
<comment type="similarity">
    <text evidence="5">Belongs to the DEAD box helicase family. DDX10/DBP4 subfamily.</text>
</comment>
<keyword id="KW-0067">ATP-binding</keyword>
<keyword id="KW-0347">Helicase</keyword>
<keyword id="KW-0378">Hydrolase</keyword>
<keyword id="KW-0547">Nucleotide-binding</keyword>
<keyword id="KW-0539">Nucleus</keyword>
<keyword id="KW-1185">Reference proteome</keyword>
<keyword id="KW-0690">Ribosome biogenesis</keyword>
<keyword id="KW-0694">RNA-binding</keyword>
<keyword id="KW-0698">rRNA processing</keyword>
<proteinExistence type="inferred from homology"/>
<feature type="chain" id="PRO_0000256002" description="ATP-dependent RNA helicase DBP4">
    <location>
        <begin position="1"/>
        <end position="856"/>
    </location>
</feature>
<feature type="domain" description="Helicase ATP-binding" evidence="2">
    <location>
        <begin position="91"/>
        <end position="274"/>
    </location>
</feature>
<feature type="domain" description="Helicase C-terminal" evidence="3">
    <location>
        <begin position="288"/>
        <end position="460"/>
    </location>
</feature>
<feature type="region of interest" description="Disordered" evidence="4">
    <location>
        <begin position="1"/>
        <end position="34"/>
    </location>
</feature>
<feature type="region of interest" description="Disordered" evidence="4">
    <location>
        <begin position="509"/>
        <end position="612"/>
    </location>
</feature>
<feature type="region of interest" description="Disordered" evidence="4">
    <location>
        <begin position="768"/>
        <end position="856"/>
    </location>
</feature>
<feature type="short sequence motif" description="Q motif">
    <location>
        <begin position="60"/>
        <end position="88"/>
    </location>
</feature>
<feature type="short sequence motif" description="DEAD box">
    <location>
        <begin position="213"/>
        <end position="216"/>
    </location>
</feature>
<feature type="compositionally biased region" description="Polar residues" evidence="4">
    <location>
        <begin position="7"/>
        <end position="17"/>
    </location>
</feature>
<feature type="compositionally biased region" description="Basic and acidic residues" evidence="4">
    <location>
        <begin position="525"/>
        <end position="536"/>
    </location>
</feature>
<feature type="compositionally biased region" description="Acidic residues" evidence="4">
    <location>
        <begin position="537"/>
        <end position="597"/>
    </location>
</feature>
<feature type="compositionally biased region" description="Low complexity" evidence="4">
    <location>
        <begin position="811"/>
        <end position="820"/>
    </location>
</feature>
<feature type="binding site" evidence="2">
    <location>
        <begin position="104"/>
        <end position="111"/>
    </location>
    <ligand>
        <name>ATP</name>
        <dbReference type="ChEBI" id="CHEBI:30616"/>
    </ligand>
</feature>
<protein>
    <recommendedName>
        <fullName>ATP-dependent RNA helicase DBP4</fullName>
        <ecNumber>3.6.4.13</ecNumber>
    </recommendedName>
</protein>
<evidence type="ECO:0000250" key="1"/>
<evidence type="ECO:0000255" key="2">
    <source>
        <dbReference type="PROSITE-ProRule" id="PRU00541"/>
    </source>
</evidence>
<evidence type="ECO:0000255" key="3">
    <source>
        <dbReference type="PROSITE-ProRule" id="PRU00542"/>
    </source>
</evidence>
<evidence type="ECO:0000256" key="4">
    <source>
        <dbReference type="SAM" id="MobiDB-lite"/>
    </source>
</evidence>
<evidence type="ECO:0000305" key="5"/>
<organism>
    <name type="scientific">Cryptococcus neoformans var. neoformans serotype D (strain JEC21 / ATCC MYA-565)</name>
    <name type="common">Filobasidiella neoformans</name>
    <dbReference type="NCBI Taxonomy" id="214684"/>
    <lineage>
        <taxon>Eukaryota</taxon>
        <taxon>Fungi</taxon>
        <taxon>Dikarya</taxon>
        <taxon>Basidiomycota</taxon>
        <taxon>Agaricomycotina</taxon>
        <taxon>Tremellomycetes</taxon>
        <taxon>Tremellales</taxon>
        <taxon>Cryptococcaceae</taxon>
        <taxon>Cryptococcus</taxon>
        <taxon>Cryptococcus neoformans species complex</taxon>
    </lineage>
</organism>
<name>DBP4_CRYNJ</name>